<comment type="function">
    <text evidence="1">Catalyzes the acyloin condensation reaction between C atoms 2 and 3 of pyruvate and glyceraldehyde 3-phosphate to yield 1-deoxy-D-xylulose-5-phosphate (DXP).</text>
</comment>
<comment type="catalytic activity">
    <reaction evidence="1">
        <text>D-glyceraldehyde 3-phosphate + pyruvate + H(+) = 1-deoxy-D-xylulose 5-phosphate + CO2</text>
        <dbReference type="Rhea" id="RHEA:12605"/>
        <dbReference type="ChEBI" id="CHEBI:15361"/>
        <dbReference type="ChEBI" id="CHEBI:15378"/>
        <dbReference type="ChEBI" id="CHEBI:16526"/>
        <dbReference type="ChEBI" id="CHEBI:57792"/>
        <dbReference type="ChEBI" id="CHEBI:59776"/>
        <dbReference type="EC" id="2.2.1.7"/>
    </reaction>
</comment>
<comment type="cofactor">
    <cofactor evidence="1">
        <name>Mg(2+)</name>
        <dbReference type="ChEBI" id="CHEBI:18420"/>
    </cofactor>
    <text evidence="1">Binds 1 Mg(2+) ion per subunit.</text>
</comment>
<comment type="cofactor">
    <cofactor evidence="1">
        <name>thiamine diphosphate</name>
        <dbReference type="ChEBI" id="CHEBI:58937"/>
    </cofactor>
    <text evidence="1">Binds 1 thiamine pyrophosphate per subunit.</text>
</comment>
<comment type="pathway">
    <text evidence="1">Metabolic intermediate biosynthesis; 1-deoxy-D-xylulose 5-phosphate biosynthesis; 1-deoxy-D-xylulose 5-phosphate from D-glyceraldehyde 3-phosphate and pyruvate: step 1/1.</text>
</comment>
<comment type="subunit">
    <text evidence="1">Homodimer.</text>
</comment>
<comment type="similarity">
    <text evidence="1">Belongs to the transketolase family. DXPS subfamily.</text>
</comment>
<sequence>MSLDISQFPVLAQANTPNELRQLPQALLPQLADELREFLLKSVGMSSGHFASGLGTVELTVALHYVYNTPFDRLIWDVGHQAYPHKILTGRRDRMHTIRQKNGLHPFPWREESEYDTFSVGHSGTSISAALAMAVAAEKEQAGRKVVAVIGDGAMTGGMVFEAMNHAGDLHNDMLMVLNDNEMSISENVGALNNHLAQLMSGRFYTTIRESSKKVLKGMPVIKEMAKRTEEHLKGMVVPGTLFEELGFNYIGPIDGHDVDALVETLRNMRNLKGPQVLHIMTKKGRGYEPAEKDPIGWHAVPKFDPSLFKKPATKPGLPTFSQVFGKWLCDIAEQDEKVLGITPAMREGSGMVEFSQRFPKQYFDAAIAEQHAVTLGAGFACEGYKPVVAIYSTFLQRGYDQLIHDVALQRLPVLFAIDRGGIVGADGPTHQGAFDLSFMRCIPNMVIMAPSDENECRQMLYTGYCYDAGPSAVRYPRGSATGATQVEAMTALPIGKGVIKRLGKRIALLNFGTTLAAALTAAESLDATVVDMRFVKPLDVDLVKEMAQTHDVLVTVEENAIMGGAGSGVLELLQQLKMPKPVLQIGLPDEFIKHGSPDEVIHDLQLDAEGMLAQINAYLAN</sequence>
<dbReference type="EC" id="2.2.1.7" evidence="1"/>
<dbReference type="EMBL" id="AE014299">
    <property type="protein sequence ID" value="AAN54586.1"/>
    <property type="molecule type" value="Genomic_DNA"/>
</dbReference>
<dbReference type="RefSeq" id="NP_717142.1">
    <property type="nucleotide sequence ID" value="NC_004347.2"/>
</dbReference>
<dbReference type="RefSeq" id="WP_011071704.1">
    <property type="nucleotide sequence ID" value="NC_004347.2"/>
</dbReference>
<dbReference type="SMR" id="Q8EGR9"/>
<dbReference type="STRING" id="211586.SO_1525"/>
<dbReference type="PaxDb" id="211586-SO_1525"/>
<dbReference type="KEGG" id="son:SO_1525"/>
<dbReference type="PATRIC" id="fig|211586.12.peg.1468"/>
<dbReference type="eggNOG" id="COG1154">
    <property type="taxonomic scope" value="Bacteria"/>
</dbReference>
<dbReference type="HOGENOM" id="CLU_009227_1_4_6"/>
<dbReference type="OrthoDB" id="9803371at2"/>
<dbReference type="PhylomeDB" id="Q8EGR9"/>
<dbReference type="BioCyc" id="SONE211586:G1GMP-1409-MONOMER"/>
<dbReference type="UniPathway" id="UPA00064">
    <property type="reaction ID" value="UER00091"/>
</dbReference>
<dbReference type="Proteomes" id="UP000008186">
    <property type="component" value="Chromosome"/>
</dbReference>
<dbReference type="GO" id="GO:0005829">
    <property type="term" value="C:cytosol"/>
    <property type="evidence" value="ECO:0000318"/>
    <property type="project" value="GO_Central"/>
</dbReference>
<dbReference type="GO" id="GO:0008661">
    <property type="term" value="F:1-deoxy-D-xylulose-5-phosphate synthase activity"/>
    <property type="evidence" value="ECO:0000318"/>
    <property type="project" value="GO_Central"/>
</dbReference>
<dbReference type="GO" id="GO:0000287">
    <property type="term" value="F:magnesium ion binding"/>
    <property type="evidence" value="ECO:0007669"/>
    <property type="project" value="UniProtKB-UniRule"/>
</dbReference>
<dbReference type="GO" id="GO:0030976">
    <property type="term" value="F:thiamine pyrophosphate binding"/>
    <property type="evidence" value="ECO:0007669"/>
    <property type="project" value="UniProtKB-UniRule"/>
</dbReference>
<dbReference type="GO" id="GO:0052865">
    <property type="term" value="P:1-deoxy-D-xylulose 5-phosphate biosynthetic process"/>
    <property type="evidence" value="ECO:0007669"/>
    <property type="project" value="UniProtKB-UniPathway"/>
</dbReference>
<dbReference type="GO" id="GO:0019288">
    <property type="term" value="P:isopentenyl diphosphate biosynthetic process, methylerythritol 4-phosphate pathway"/>
    <property type="evidence" value="ECO:0000318"/>
    <property type="project" value="GO_Central"/>
</dbReference>
<dbReference type="GO" id="GO:0016114">
    <property type="term" value="P:terpenoid biosynthetic process"/>
    <property type="evidence" value="ECO:0007669"/>
    <property type="project" value="UniProtKB-UniRule"/>
</dbReference>
<dbReference type="GO" id="GO:0009228">
    <property type="term" value="P:thiamine biosynthetic process"/>
    <property type="evidence" value="ECO:0007669"/>
    <property type="project" value="UniProtKB-UniRule"/>
</dbReference>
<dbReference type="CDD" id="cd02007">
    <property type="entry name" value="TPP_DXS"/>
    <property type="match status" value="1"/>
</dbReference>
<dbReference type="CDD" id="cd07033">
    <property type="entry name" value="TPP_PYR_DXS_TK_like"/>
    <property type="match status" value="1"/>
</dbReference>
<dbReference type="FunFam" id="3.40.50.920:FF:000002">
    <property type="entry name" value="1-deoxy-D-xylulose-5-phosphate synthase"/>
    <property type="match status" value="1"/>
</dbReference>
<dbReference type="FunFam" id="3.40.50.970:FF:000005">
    <property type="entry name" value="1-deoxy-D-xylulose-5-phosphate synthase"/>
    <property type="match status" value="1"/>
</dbReference>
<dbReference type="Gene3D" id="3.40.50.920">
    <property type="match status" value="1"/>
</dbReference>
<dbReference type="Gene3D" id="3.40.50.970">
    <property type="match status" value="2"/>
</dbReference>
<dbReference type="HAMAP" id="MF_00315">
    <property type="entry name" value="DXP_synth"/>
    <property type="match status" value="1"/>
</dbReference>
<dbReference type="InterPro" id="IPR005477">
    <property type="entry name" value="Dxylulose-5-P_synthase"/>
</dbReference>
<dbReference type="InterPro" id="IPR029061">
    <property type="entry name" value="THDP-binding"/>
</dbReference>
<dbReference type="InterPro" id="IPR009014">
    <property type="entry name" value="Transketo_C/PFOR_II"/>
</dbReference>
<dbReference type="InterPro" id="IPR005475">
    <property type="entry name" value="Transketolase-like_Pyr-bd"/>
</dbReference>
<dbReference type="InterPro" id="IPR020826">
    <property type="entry name" value="Transketolase_BS"/>
</dbReference>
<dbReference type="InterPro" id="IPR033248">
    <property type="entry name" value="Transketolase_C"/>
</dbReference>
<dbReference type="InterPro" id="IPR049557">
    <property type="entry name" value="Transketolase_CS"/>
</dbReference>
<dbReference type="NCBIfam" id="TIGR00204">
    <property type="entry name" value="dxs"/>
    <property type="match status" value="1"/>
</dbReference>
<dbReference type="NCBIfam" id="NF003933">
    <property type="entry name" value="PRK05444.2-2"/>
    <property type="match status" value="1"/>
</dbReference>
<dbReference type="PANTHER" id="PTHR43322">
    <property type="entry name" value="1-D-DEOXYXYLULOSE 5-PHOSPHATE SYNTHASE-RELATED"/>
    <property type="match status" value="1"/>
</dbReference>
<dbReference type="PANTHER" id="PTHR43322:SF5">
    <property type="entry name" value="1-DEOXY-D-XYLULOSE-5-PHOSPHATE SYNTHASE, CHLOROPLASTIC"/>
    <property type="match status" value="1"/>
</dbReference>
<dbReference type="Pfam" id="PF13292">
    <property type="entry name" value="DXP_synthase_N"/>
    <property type="match status" value="1"/>
</dbReference>
<dbReference type="Pfam" id="PF02779">
    <property type="entry name" value="Transket_pyr"/>
    <property type="match status" value="1"/>
</dbReference>
<dbReference type="Pfam" id="PF02780">
    <property type="entry name" value="Transketolase_C"/>
    <property type="match status" value="1"/>
</dbReference>
<dbReference type="SMART" id="SM00861">
    <property type="entry name" value="Transket_pyr"/>
    <property type="match status" value="1"/>
</dbReference>
<dbReference type="SUPFAM" id="SSF52518">
    <property type="entry name" value="Thiamin diphosphate-binding fold (THDP-binding)"/>
    <property type="match status" value="2"/>
</dbReference>
<dbReference type="SUPFAM" id="SSF52922">
    <property type="entry name" value="TK C-terminal domain-like"/>
    <property type="match status" value="1"/>
</dbReference>
<dbReference type="PROSITE" id="PS00801">
    <property type="entry name" value="TRANSKETOLASE_1"/>
    <property type="match status" value="1"/>
</dbReference>
<dbReference type="PROSITE" id="PS00802">
    <property type="entry name" value="TRANSKETOLASE_2"/>
    <property type="match status" value="1"/>
</dbReference>
<protein>
    <recommendedName>
        <fullName evidence="1">1-deoxy-D-xylulose-5-phosphate synthase</fullName>
        <ecNumber evidence="1">2.2.1.7</ecNumber>
    </recommendedName>
    <alternativeName>
        <fullName evidence="1">1-deoxyxylulose-5-phosphate synthase</fullName>
        <shortName evidence="1">DXP synthase</shortName>
        <shortName evidence="1">DXPS</shortName>
    </alternativeName>
</protein>
<accession>Q8EGR9</accession>
<proteinExistence type="inferred from homology"/>
<evidence type="ECO:0000255" key="1">
    <source>
        <dbReference type="HAMAP-Rule" id="MF_00315"/>
    </source>
</evidence>
<keyword id="KW-0414">Isoprene biosynthesis</keyword>
<keyword id="KW-0460">Magnesium</keyword>
<keyword id="KW-0479">Metal-binding</keyword>
<keyword id="KW-1185">Reference proteome</keyword>
<keyword id="KW-0784">Thiamine biosynthesis</keyword>
<keyword id="KW-0786">Thiamine pyrophosphate</keyword>
<keyword id="KW-0808">Transferase</keyword>
<organism>
    <name type="scientific">Shewanella oneidensis (strain ATCC 700550 / JCM 31522 / CIP 106686 / LMG 19005 / NCIMB 14063 / MR-1)</name>
    <dbReference type="NCBI Taxonomy" id="211586"/>
    <lineage>
        <taxon>Bacteria</taxon>
        <taxon>Pseudomonadati</taxon>
        <taxon>Pseudomonadota</taxon>
        <taxon>Gammaproteobacteria</taxon>
        <taxon>Alteromonadales</taxon>
        <taxon>Shewanellaceae</taxon>
        <taxon>Shewanella</taxon>
    </lineage>
</organism>
<gene>
    <name evidence="1" type="primary">dxs</name>
    <name type="ordered locus">SO_1525</name>
</gene>
<name>DXS_SHEON</name>
<reference key="1">
    <citation type="journal article" date="2002" name="Nat. Biotechnol.">
        <title>Genome sequence of the dissimilatory metal ion-reducing bacterium Shewanella oneidensis.</title>
        <authorList>
            <person name="Heidelberg J.F."/>
            <person name="Paulsen I.T."/>
            <person name="Nelson K.E."/>
            <person name="Gaidos E.J."/>
            <person name="Nelson W.C."/>
            <person name="Read T.D."/>
            <person name="Eisen J.A."/>
            <person name="Seshadri R."/>
            <person name="Ward N.L."/>
            <person name="Methe B.A."/>
            <person name="Clayton R.A."/>
            <person name="Meyer T."/>
            <person name="Tsapin A."/>
            <person name="Scott J."/>
            <person name="Beanan M.J."/>
            <person name="Brinkac L.M."/>
            <person name="Daugherty S.C."/>
            <person name="DeBoy R.T."/>
            <person name="Dodson R.J."/>
            <person name="Durkin A.S."/>
            <person name="Haft D.H."/>
            <person name="Kolonay J.F."/>
            <person name="Madupu R."/>
            <person name="Peterson J.D."/>
            <person name="Umayam L.A."/>
            <person name="White O."/>
            <person name="Wolf A.M."/>
            <person name="Vamathevan J.J."/>
            <person name="Weidman J.F."/>
            <person name="Impraim M."/>
            <person name="Lee K."/>
            <person name="Berry K.J."/>
            <person name="Lee C."/>
            <person name="Mueller J."/>
            <person name="Khouri H.M."/>
            <person name="Gill J."/>
            <person name="Utterback T.R."/>
            <person name="McDonald L.A."/>
            <person name="Feldblyum T.V."/>
            <person name="Smith H.O."/>
            <person name="Venter J.C."/>
            <person name="Nealson K.H."/>
            <person name="Fraser C.M."/>
        </authorList>
    </citation>
    <scope>NUCLEOTIDE SEQUENCE [LARGE SCALE GENOMIC DNA]</scope>
    <source>
        <strain>ATCC 700550 / JCM 31522 / CIP 106686 / LMG 19005 / NCIMB 14063 / MR-1</strain>
    </source>
</reference>
<feature type="chain" id="PRO_0000189152" description="1-deoxy-D-xylulose-5-phosphate synthase">
    <location>
        <begin position="1"/>
        <end position="622"/>
    </location>
</feature>
<feature type="binding site" evidence="1">
    <location>
        <position position="80"/>
    </location>
    <ligand>
        <name>thiamine diphosphate</name>
        <dbReference type="ChEBI" id="CHEBI:58937"/>
    </ligand>
</feature>
<feature type="binding site" evidence="1">
    <location>
        <begin position="121"/>
        <end position="123"/>
    </location>
    <ligand>
        <name>thiamine diphosphate</name>
        <dbReference type="ChEBI" id="CHEBI:58937"/>
    </ligand>
</feature>
<feature type="binding site" evidence="1">
    <location>
        <position position="152"/>
    </location>
    <ligand>
        <name>Mg(2+)</name>
        <dbReference type="ChEBI" id="CHEBI:18420"/>
    </ligand>
</feature>
<feature type="binding site" evidence="1">
    <location>
        <begin position="153"/>
        <end position="154"/>
    </location>
    <ligand>
        <name>thiamine diphosphate</name>
        <dbReference type="ChEBI" id="CHEBI:58937"/>
    </ligand>
</feature>
<feature type="binding site" evidence="1">
    <location>
        <position position="181"/>
    </location>
    <ligand>
        <name>Mg(2+)</name>
        <dbReference type="ChEBI" id="CHEBI:18420"/>
    </ligand>
</feature>
<feature type="binding site" evidence="1">
    <location>
        <position position="181"/>
    </location>
    <ligand>
        <name>thiamine diphosphate</name>
        <dbReference type="ChEBI" id="CHEBI:58937"/>
    </ligand>
</feature>
<feature type="binding site" evidence="1">
    <location>
        <position position="288"/>
    </location>
    <ligand>
        <name>thiamine diphosphate</name>
        <dbReference type="ChEBI" id="CHEBI:58937"/>
    </ligand>
</feature>
<feature type="binding site" evidence="1">
    <location>
        <position position="370"/>
    </location>
    <ligand>
        <name>thiamine diphosphate</name>
        <dbReference type="ChEBI" id="CHEBI:58937"/>
    </ligand>
</feature>